<sequence length="266" mass="29934">MGQKIHPTGFRLAVSRNWASRWYANNNNFAAMLQEDIGVREYLKKKLKNASVGRVVIERPAKNARITIYSSRPGVVIGKKGEDIEQLKTELQRRMGVPVHVNIEEIRKPETDAQLIADSITQQLERRIMFRRAMKRAMQNAMRLGAQGIKIMSAGRLNGIEIARTEWYREGRVPLHTLRADIDYATSEAKTTYGIIGVKVWVYKGDTLGRNDAPVVEEVAEDKRPRRNARPGDRRPRRDGEGGAPGARRGAPRRGAGKPEDGKTGE</sequence>
<evidence type="ECO:0000255" key="1">
    <source>
        <dbReference type="HAMAP-Rule" id="MF_01309"/>
    </source>
</evidence>
<evidence type="ECO:0000256" key="2">
    <source>
        <dbReference type="SAM" id="MobiDB-lite"/>
    </source>
</evidence>
<evidence type="ECO:0000305" key="3"/>
<dbReference type="EMBL" id="CP000958">
    <property type="protein sequence ID" value="ACA89513.1"/>
    <property type="molecule type" value="Genomic_DNA"/>
</dbReference>
<dbReference type="RefSeq" id="WP_006482899.1">
    <property type="nucleotide sequence ID" value="NC_010508.1"/>
</dbReference>
<dbReference type="SMR" id="B1JU28"/>
<dbReference type="GeneID" id="98107154"/>
<dbReference type="KEGG" id="bcm:Bcenmc03_0333"/>
<dbReference type="HOGENOM" id="CLU_058591_0_2_4"/>
<dbReference type="Proteomes" id="UP000002169">
    <property type="component" value="Chromosome 1"/>
</dbReference>
<dbReference type="GO" id="GO:0022627">
    <property type="term" value="C:cytosolic small ribosomal subunit"/>
    <property type="evidence" value="ECO:0007669"/>
    <property type="project" value="TreeGrafter"/>
</dbReference>
<dbReference type="GO" id="GO:0003729">
    <property type="term" value="F:mRNA binding"/>
    <property type="evidence" value="ECO:0007669"/>
    <property type="project" value="UniProtKB-UniRule"/>
</dbReference>
<dbReference type="GO" id="GO:0019843">
    <property type="term" value="F:rRNA binding"/>
    <property type="evidence" value="ECO:0007669"/>
    <property type="project" value="UniProtKB-UniRule"/>
</dbReference>
<dbReference type="GO" id="GO:0003735">
    <property type="term" value="F:structural constituent of ribosome"/>
    <property type="evidence" value="ECO:0007669"/>
    <property type="project" value="InterPro"/>
</dbReference>
<dbReference type="GO" id="GO:0006412">
    <property type="term" value="P:translation"/>
    <property type="evidence" value="ECO:0007669"/>
    <property type="project" value="UniProtKB-UniRule"/>
</dbReference>
<dbReference type="CDD" id="cd02412">
    <property type="entry name" value="KH-II_30S_S3"/>
    <property type="match status" value="1"/>
</dbReference>
<dbReference type="FunFam" id="3.30.1140.32:FF:000006">
    <property type="entry name" value="30S ribosomal protein S3"/>
    <property type="match status" value="1"/>
</dbReference>
<dbReference type="FunFam" id="3.30.300.20:FF:000001">
    <property type="entry name" value="30S ribosomal protein S3"/>
    <property type="match status" value="1"/>
</dbReference>
<dbReference type="Gene3D" id="3.30.300.20">
    <property type="match status" value="1"/>
</dbReference>
<dbReference type="Gene3D" id="3.30.1140.32">
    <property type="entry name" value="Ribosomal protein S3, C-terminal domain"/>
    <property type="match status" value="1"/>
</dbReference>
<dbReference type="HAMAP" id="MF_01309_B">
    <property type="entry name" value="Ribosomal_uS3_B"/>
    <property type="match status" value="1"/>
</dbReference>
<dbReference type="InterPro" id="IPR004087">
    <property type="entry name" value="KH_dom"/>
</dbReference>
<dbReference type="InterPro" id="IPR015946">
    <property type="entry name" value="KH_dom-like_a/b"/>
</dbReference>
<dbReference type="InterPro" id="IPR004044">
    <property type="entry name" value="KH_dom_type_2"/>
</dbReference>
<dbReference type="InterPro" id="IPR009019">
    <property type="entry name" value="KH_sf_prok-type"/>
</dbReference>
<dbReference type="InterPro" id="IPR036419">
    <property type="entry name" value="Ribosomal_S3_C_sf"/>
</dbReference>
<dbReference type="InterPro" id="IPR005704">
    <property type="entry name" value="Ribosomal_uS3_bac-typ"/>
</dbReference>
<dbReference type="InterPro" id="IPR001351">
    <property type="entry name" value="Ribosomal_uS3_C"/>
</dbReference>
<dbReference type="InterPro" id="IPR018280">
    <property type="entry name" value="Ribosomal_uS3_CS"/>
</dbReference>
<dbReference type="NCBIfam" id="TIGR01009">
    <property type="entry name" value="rpsC_bact"/>
    <property type="match status" value="1"/>
</dbReference>
<dbReference type="PANTHER" id="PTHR11760">
    <property type="entry name" value="30S/40S RIBOSOMAL PROTEIN S3"/>
    <property type="match status" value="1"/>
</dbReference>
<dbReference type="PANTHER" id="PTHR11760:SF19">
    <property type="entry name" value="SMALL RIBOSOMAL SUBUNIT PROTEIN US3C"/>
    <property type="match status" value="1"/>
</dbReference>
<dbReference type="Pfam" id="PF07650">
    <property type="entry name" value="KH_2"/>
    <property type="match status" value="1"/>
</dbReference>
<dbReference type="Pfam" id="PF00189">
    <property type="entry name" value="Ribosomal_S3_C"/>
    <property type="match status" value="1"/>
</dbReference>
<dbReference type="SMART" id="SM00322">
    <property type="entry name" value="KH"/>
    <property type="match status" value="1"/>
</dbReference>
<dbReference type="SUPFAM" id="SSF54814">
    <property type="entry name" value="Prokaryotic type KH domain (KH-domain type II)"/>
    <property type="match status" value="1"/>
</dbReference>
<dbReference type="SUPFAM" id="SSF54821">
    <property type="entry name" value="Ribosomal protein S3 C-terminal domain"/>
    <property type="match status" value="1"/>
</dbReference>
<dbReference type="PROSITE" id="PS50823">
    <property type="entry name" value="KH_TYPE_2"/>
    <property type="match status" value="1"/>
</dbReference>
<dbReference type="PROSITE" id="PS00548">
    <property type="entry name" value="RIBOSOMAL_S3"/>
    <property type="match status" value="1"/>
</dbReference>
<protein>
    <recommendedName>
        <fullName evidence="1">Small ribosomal subunit protein uS3</fullName>
    </recommendedName>
    <alternativeName>
        <fullName evidence="3">30S ribosomal protein S3</fullName>
    </alternativeName>
</protein>
<gene>
    <name evidence="1" type="primary">rpsC</name>
    <name type="ordered locus">Bcenmc03_0333</name>
</gene>
<feature type="chain" id="PRO_1000140931" description="Small ribosomal subunit protein uS3">
    <location>
        <begin position="1"/>
        <end position="266"/>
    </location>
</feature>
<feature type="domain" description="KH type-2" evidence="1">
    <location>
        <begin position="39"/>
        <end position="107"/>
    </location>
</feature>
<feature type="region of interest" description="Disordered" evidence="2">
    <location>
        <begin position="218"/>
        <end position="266"/>
    </location>
</feature>
<feature type="compositionally biased region" description="Basic and acidic residues" evidence="2">
    <location>
        <begin position="230"/>
        <end position="241"/>
    </location>
</feature>
<feature type="compositionally biased region" description="Basic and acidic residues" evidence="2">
    <location>
        <begin position="257"/>
        <end position="266"/>
    </location>
</feature>
<organism>
    <name type="scientific">Burkholderia orbicola (strain MC0-3)</name>
    <dbReference type="NCBI Taxonomy" id="406425"/>
    <lineage>
        <taxon>Bacteria</taxon>
        <taxon>Pseudomonadati</taxon>
        <taxon>Pseudomonadota</taxon>
        <taxon>Betaproteobacteria</taxon>
        <taxon>Burkholderiales</taxon>
        <taxon>Burkholderiaceae</taxon>
        <taxon>Burkholderia</taxon>
        <taxon>Burkholderia cepacia complex</taxon>
        <taxon>Burkholderia orbicola</taxon>
    </lineage>
</organism>
<keyword id="KW-0687">Ribonucleoprotein</keyword>
<keyword id="KW-0689">Ribosomal protein</keyword>
<keyword id="KW-0694">RNA-binding</keyword>
<keyword id="KW-0699">rRNA-binding</keyword>
<accession>B1JU28</accession>
<reference key="1">
    <citation type="submission" date="2008-02" db="EMBL/GenBank/DDBJ databases">
        <title>Complete sequence of chromosome 1 of Burkholderia cenocepacia MC0-3.</title>
        <authorList>
            <person name="Copeland A."/>
            <person name="Lucas S."/>
            <person name="Lapidus A."/>
            <person name="Barry K."/>
            <person name="Bruce D."/>
            <person name="Goodwin L."/>
            <person name="Glavina del Rio T."/>
            <person name="Dalin E."/>
            <person name="Tice H."/>
            <person name="Pitluck S."/>
            <person name="Chain P."/>
            <person name="Malfatti S."/>
            <person name="Shin M."/>
            <person name="Vergez L."/>
            <person name="Schmutz J."/>
            <person name="Larimer F."/>
            <person name="Land M."/>
            <person name="Hauser L."/>
            <person name="Kyrpides N."/>
            <person name="Mikhailova N."/>
            <person name="Tiedje J."/>
            <person name="Richardson P."/>
        </authorList>
    </citation>
    <scope>NUCLEOTIDE SEQUENCE [LARGE SCALE GENOMIC DNA]</scope>
    <source>
        <strain>MC0-3</strain>
    </source>
</reference>
<name>RS3_BURO0</name>
<proteinExistence type="inferred from homology"/>
<comment type="function">
    <text evidence="1">Binds the lower part of the 30S subunit head. Binds mRNA in the 70S ribosome, positioning it for translation.</text>
</comment>
<comment type="subunit">
    <text evidence="1">Part of the 30S ribosomal subunit. Forms a tight complex with proteins S10 and S14.</text>
</comment>
<comment type="similarity">
    <text evidence="1">Belongs to the universal ribosomal protein uS3 family.</text>
</comment>